<reference key="1">
    <citation type="journal article" date="2008" name="DNA Res.">
        <title>Complete genome sequence and comparative analysis of the wild-type commensal Escherichia coli strain SE11 isolated from a healthy adult.</title>
        <authorList>
            <person name="Oshima K."/>
            <person name="Toh H."/>
            <person name="Ogura Y."/>
            <person name="Sasamoto H."/>
            <person name="Morita H."/>
            <person name="Park S.-H."/>
            <person name="Ooka T."/>
            <person name="Iyoda S."/>
            <person name="Taylor T.D."/>
            <person name="Hayashi T."/>
            <person name="Itoh K."/>
            <person name="Hattori M."/>
        </authorList>
    </citation>
    <scope>NUCLEOTIDE SEQUENCE [LARGE SCALE GENOMIC DNA]</scope>
    <source>
        <strain>SE11</strain>
    </source>
</reference>
<accession>B6HZP3</accession>
<comment type="function">
    <text evidence="1">Involved in protein export. Acts as a chaperone by maintaining the newly synthesized protein in an open conformation. Functions as a peptidyl-prolyl cis-trans isomerase.</text>
</comment>
<comment type="catalytic activity">
    <reaction evidence="1">
        <text>[protein]-peptidylproline (omega=180) = [protein]-peptidylproline (omega=0)</text>
        <dbReference type="Rhea" id="RHEA:16237"/>
        <dbReference type="Rhea" id="RHEA-COMP:10747"/>
        <dbReference type="Rhea" id="RHEA-COMP:10748"/>
        <dbReference type="ChEBI" id="CHEBI:83833"/>
        <dbReference type="ChEBI" id="CHEBI:83834"/>
        <dbReference type="EC" id="5.2.1.8"/>
    </reaction>
</comment>
<comment type="subunit">
    <text evidence="1">Homodimer and monomer. In vivo most of the ribosomes are in complex with monomeric TF. Uncomplexed TF, however, is in a monomer-dimer equilibrium with approximately two thirds of TF existing in a dimeric state.</text>
</comment>
<comment type="subcellular location">
    <subcellularLocation>
        <location>Cytoplasm</location>
    </subcellularLocation>
    <text evidence="1">About half TF is bound to the ribosome near the polypeptide exit tunnel while the other half is free in the cytoplasm.</text>
</comment>
<comment type="domain">
    <text evidence="1">Consists of 3 domains; the N-terminus binds the ribosome, the middle domain has PPIase activity, while the C-terminus has intrinsic chaperone activity on its own.</text>
</comment>
<comment type="similarity">
    <text evidence="1">Belongs to the FKBP-type PPIase family. Tig subfamily.</text>
</comment>
<sequence length="432" mass="48179">MQVSVETTQGLGRRVTITIAADSIETAVKSELVNVAKKVRIDGFRKGKVPMNIVAQRYGASVRQDVLGDLMSRNFIDAIIKEKINPAGAPTYVPGEYKLGEDFTYSVEFEVYPEVELQGLEAIEVEKPIVEVTDADVDGMLDTLRKQQATWKDKDGAVEAEDRVTIDFTGSVDGEEFEGGKASDFVLAMGQGRMIPGFEDGIKGHKAGEEFTIDVTFPEEYHAENLKGKAAKFAINLKKVEERELPELTAEFIKRFGVEDGSVEGLRAEVRKNMERELKSAIRNRVKSQAIEGLVKANDIDVPAALIDSEIDVLRRQAAQRFGGNEKQALELPRELFEEQAKRRVVVGLLLGEVIRTNELKADEERVKGLIEEMASAYEDPKEVIEFYSKNKELMDNMRNVALEEQAVEAVLAKAKVTEKETTFNELMNQQA</sequence>
<evidence type="ECO:0000255" key="1">
    <source>
        <dbReference type="HAMAP-Rule" id="MF_00303"/>
    </source>
</evidence>
<dbReference type="EC" id="5.2.1.8" evidence="1"/>
<dbReference type="EMBL" id="AP009240">
    <property type="protein sequence ID" value="BAG75986.1"/>
    <property type="molecule type" value="Genomic_DNA"/>
</dbReference>
<dbReference type="RefSeq" id="WP_001198381.1">
    <property type="nucleotide sequence ID" value="NC_011415.1"/>
</dbReference>
<dbReference type="SMR" id="B6HZP3"/>
<dbReference type="KEGG" id="ecy:ECSE_0462"/>
<dbReference type="HOGENOM" id="CLU_033058_2_0_6"/>
<dbReference type="Proteomes" id="UP000008199">
    <property type="component" value="Chromosome"/>
</dbReference>
<dbReference type="GO" id="GO:0005737">
    <property type="term" value="C:cytoplasm"/>
    <property type="evidence" value="ECO:0007669"/>
    <property type="project" value="UniProtKB-SubCell"/>
</dbReference>
<dbReference type="GO" id="GO:0003755">
    <property type="term" value="F:peptidyl-prolyl cis-trans isomerase activity"/>
    <property type="evidence" value="ECO:0007669"/>
    <property type="project" value="UniProtKB-UniRule"/>
</dbReference>
<dbReference type="GO" id="GO:0044183">
    <property type="term" value="F:protein folding chaperone"/>
    <property type="evidence" value="ECO:0007669"/>
    <property type="project" value="TreeGrafter"/>
</dbReference>
<dbReference type="GO" id="GO:0043022">
    <property type="term" value="F:ribosome binding"/>
    <property type="evidence" value="ECO:0007669"/>
    <property type="project" value="TreeGrafter"/>
</dbReference>
<dbReference type="GO" id="GO:0051083">
    <property type="term" value="P:'de novo' cotranslational protein folding"/>
    <property type="evidence" value="ECO:0007669"/>
    <property type="project" value="TreeGrafter"/>
</dbReference>
<dbReference type="GO" id="GO:0051301">
    <property type="term" value="P:cell division"/>
    <property type="evidence" value="ECO:0007669"/>
    <property type="project" value="UniProtKB-KW"/>
</dbReference>
<dbReference type="GO" id="GO:0061077">
    <property type="term" value="P:chaperone-mediated protein folding"/>
    <property type="evidence" value="ECO:0007669"/>
    <property type="project" value="TreeGrafter"/>
</dbReference>
<dbReference type="GO" id="GO:0015031">
    <property type="term" value="P:protein transport"/>
    <property type="evidence" value="ECO:0007669"/>
    <property type="project" value="UniProtKB-UniRule"/>
</dbReference>
<dbReference type="GO" id="GO:0043335">
    <property type="term" value="P:protein unfolding"/>
    <property type="evidence" value="ECO:0007669"/>
    <property type="project" value="TreeGrafter"/>
</dbReference>
<dbReference type="FunFam" id="1.10.3120.10:FF:000001">
    <property type="entry name" value="Trigger factor"/>
    <property type="match status" value="1"/>
</dbReference>
<dbReference type="FunFam" id="3.10.50.40:FF:000001">
    <property type="entry name" value="Trigger factor"/>
    <property type="match status" value="1"/>
</dbReference>
<dbReference type="FunFam" id="3.30.70.1050:FF:000001">
    <property type="entry name" value="Trigger factor"/>
    <property type="match status" value="1"/>
</dbReference>
<dbReference type="Gene3D" id="3.10.50.40">
    <property type="match status" value="1"/>
</dbReference>
<dbReference type="Gene3D" id="3.30.70.1050">
    <property type="entry name" value="Trigger factor ribosome-binding domain"/>
    <property type="match status" value="1"/>
</dbReference>
<dbReference type="Gene3D" id="1.10.3120.10">
    <property type="entry name" value="Trigger factor, C-terminal domain"/>
    <property type="match status" value="1"/>
</dbReference>
<dbReference type="HAMAP" id="MF_00303">
    <property type="entry name" value="Trigger_factor_Tig"/>
    <property type="match status" value="1"/>
</dbReference>
<dbReference type="InterPro" id="IPR046357">
    <property type="entry name" value="PPIase_dom_sf"/>
</dbReference>
<dbReference type="InterPro" id="IPR001179">
    <property type="entry name" value="PPIase_FKBP_dom"/>
</dbReference>
<dbReference type="InterPro" id="IPR005215">
    <property type="entry name" value="Trig_fac"/>
</dbReference>
<dbReference type="InterPro" id="IPR008880">
    <property type="entry name" value="Trigger_fac_C"/>
</dbReference>
<dbReference type="InterPro" id="IPR037041">
    <property type="entry name" value="Trigger_fac_C_sf"/>
</dbReference>
<dbReference type="InterPro" id="IPR008881">
    <property type="entry name" value="Trigger_fac_ribosome-bd_bac"/>
</dbReference>
<dbReference type="InterPro" id="IPR036611">
    <property type="entry name" value="Trigger_fac_ribosome-bd_sf"/>
</dbReference>
<dbReference type="InterPro" id="IPR027304">
    <property type="entry name" value="Trigger_fact/SurA_dom_sf"/>
</dbReference>
<dbReference type="NCBIfam" id="TIGR00115">
    <property type="entry name" value="tig"/>
    <property type="match status" value="1"/>
</dbReference>
<dbReference type="PANTHER" id="PTHR30560">
    <property type="entry name" value="TRIGGER FACTOR CHAPERONE AND PEPTIDYL-PROLYL CIS/TRANS ISOMERASE"/>
    <property type="match status" value="1"/>
</dbReference>
<dbReference type="PANTHER" id="PTHR30560:SF3">
    <property type="entry name" value="TRIGGER FACTOR-LIKE PROTEIN TIG, CHLOROPLASTIC"/>
    <property type="match status" value="1"/>
</dbReference>
<dbReference type="Pfam" id="PF00254">
    <property type="entry name" value="FKBP_C"/>
    <property type="match status" value="1"/>
</dbReference>
<dbReference type="Pfam" id="PF05698">
    <property type="entry name" value="Trigger_C"/>
    <property type="match status" value="1"/>
</dbReference>
<dbReference type="Pfam" id="PF05697">
    <property type="entry name" value="Trigger_N"/>
    <property type="match status" value="1"/>
</dbReference>
<dbReference type="PIRSF" id="PIRSF003095">
    <property type="entry name" value="Trigger_factor"/>
    <property type="match status" value="1"/>
</dbReference>
<dbReference type="SUPFAM" id="SSF54534">
    <property type="entry name" value="FKBP-like"/>
    <property type="match status" value="1"/>
</dbReference>
<dbReference type="SUPFAM" id="SSF109998">
    <property type="entry name" value="Triger factor/SurA peptide-binding domain-like"/>
    <property type="match status" value="1"/>
</dbReference>
<dbReference type="SUPFAM" id="SSF102735">
    <property type="entry name" value="Trigger factor ribosome-binding domain"/>
    <property type="match status" value="1"/>
</dbReference>
<dbReference type="PROSITE" id="PS50059">
    <property type="entry name" value="FKBP_PPIASE"/>
    <property type="match status" value="1"/>
</dbReference>
<proteinExistence type="inferred from homology"/>
<organism>
    <name type="scientific">Escherichia coli (strain SE11)</name>
    <dbReference type="NCBI Taxonomy" id="409438"/>
    <lineage>
        <taxon>Bacteria</taxon>
        <taxon>Pseudomonadati</taxon>
        <taxon>Pseudomonadota</taxon>
        <taxon>Gammaproteobacteria</taxon>
        <taxon>Enterobacterales</taxon>
        <taxon>Enterobacteriaceae</taxon>
        <taxon>Escherichia</taxon>
    </lineage>
</organism>
<protein>
    <recommendedName>
        <fullName evidence="1">Trigger factor</fullName>
        <shortName evidence="1">TF</shortName>
        <ecNumber evidence="1">5.2.1.8</ecNumber>
    </recommendedName>
    <alternativeName>
        <fullName evidence="1">PPIase</fullName>
    </alternativeName>
</protein>
<feature type="chain" id="PRO_1000115532" description="Trigger factor">
    <location>
        <begin position="1"/>
        <end position="432"/>
    </location>
</feature>
<feature type="domain" description="PPIase FKBP-type" evidence="1">
    <location>
        <begin position="161"/>
        <end position="246"/>
    </location>
</feature>
<gene>
    <name evidence="1" type="primary">tig</name>
    <name type="ordered locus">ECSE_0462</name>
</gene>
<keyword id="KW-0131">Cell cycle</keyword>
<keyword id="KW-0132">Cell division</keyword>
<keyword id="KW-0143">Chaperone</keyword>
<keyword id="KW-0963">Cytoplasm</keyword>
<keyword id="KW-0413">Isomerase</keyword>
<keyword id="KW-0697">Rotamase</keyword>
<name>TIG_ECOSE</name>